<gene>
    <name evidence="2" type="primary">rpsM</name>
    <name type="ordered locus">STM3418</name>
</gene>
<protein>
    <recommendedName>
        <fullName evidence="2">Small ribosomal subunit protein uS13</fullName>
    </recommendedName>
    <alternativeName>
        <fullName evidence="4">30S ribosomal protein S13</fullName>
    </alternativeName>
</protein>
<comment type="function">
    <text evidence="2">Located at the top of the head of the 30S subunit, it contacts several helices of the 16S rRNA. In the 70S ribosome it contacts the 23S rRNA (bridge B1a) and protein L5 of the 50S subunit (bridge B1b), connecting the 2 subunits; these bridges are implicated in subunit movement. Contacts the tRNAs in the A and P-sites.</text>
</comment>
<comment type="subunit">
    <text evidence="2">Part of the 30S ribosomal subunit. Forms a loose heterodimer with protein S19. Forms two bridges to the 50S subunit in the 70S ribosome.</text>
</comment>
<comment type="similarity">
    <text evidence="2">Belongs to the universal ribosomal protein uS13 family.</text>
</comment>
<evidence type="ECO:0000250" key="1"/>
<evidence type="ECO:0000255" key="2">
    <source>
        <dbReference type="HAMAP-Rule" id="MF_01315"/>
    </source>
</evidence>
<evidence type="ECO:0000256" key="3">
    <source>
        <dbReference type="SAM" id="MobiDB-lite"/>
    </source>
</evidence>
<evidence type="ECO:0000305" key="4"/>
<organism>
    <name type="scientific">Salmonella typhimurium (strain LT2 / SGSC1412 / ATCC 700720)</name>
    <dbReference type="NCBI Taxonomy" id="99287"/>
    <lineage>
        <taxon>Bacteria</taxon>
        <taxon>Pseudomonadati</taxon>
        <taxon>Pseudomonadota</taxon>
        <taxon>Gammaproteobacteria</taxon>
        <taxon>Enterobacterales</taxon>
        <taxon>Enterobacteriaceae</taxon>
        <taxon>Salmonella</taxon>
    </lineage>
</organism>
<keyword id="KW-1185">Reference proteome</keyword>
<keyword id="KW-0687">Ribonucleoprotein</keyword>
<keyword id="KW-0689">Ribosomal protein</keyword>
<keyword id="KW-0694">RNA-binding</keyword>
<keyword id="KW-0699">rRNA-binding</keyword>
<keyword id="KW-0820">tRNA-binding</keyword>
<reference key="1">
    <citation type="journal article" date="2001" name="Nature">
        <title>Complete genome sequence of Salmonella enterica serovar Typhimurium LT2.</title>
        <authorList>
            <person name="McClelland M."/>
            <person name="Sanderson K.E."/>
            <person name="Spieth J."/>
            <person name="Clifton S.W."/>
            <person name="Latreille P."/>
            <person name="Courtney L."/>
            <person name="Porwollik S."/>
            <person name="Ali J."/>
            <person name="Dante M."/>
            <person name="Du F."/>
            <person name="Hou S."/>
            <person name="Layman D."/>
            <person name="Leonard S."/>
            <person name="Nguyen C."/>
            <person name="Scott K."/>
            <person name="Holmes A."/>
            <person name="Grewal N."/>
            <person name="Mulvaney E."/>
            <person name="Ryan E."/>
            <person name="Sun H."/>
            <person name="Florea L."/>
            <person name="Miller W."/>
            <person name="Stoneking T."/>
            <person name="Nhan M."/>
            <person name="Waterston R."/>
            <person name="Wilson R.K."/>
        </authorList>
    </citation>
    <scope>NUCLEOTIDE SEQUENCE [LARGE SCALE GENOMIC DNA]</scope>
    <source>
        <strain>LT2 / SGSC1412 / ATCC 700720</strain>
    </source>
</reference>
<sequence>MARIAGINIPDQKHAVIALTSIYGVGKTRSKAILAAAGIAENVKISELSEEQIDTLRDEVAKFVVEGDLRREISMSIKRLMDLGCYRGLRHRRGLPVRGQRTKTNARTRKGPRKPIKK</sequence>
<proteinExistence type="inferred from homology"/>
<feature type="initiator methionine" description="Removed" evidence="1">
    <location>
        <position position="1"/>
    </location>
</feature>
<feature type="chain" id="PRO_0000132130" description="Small ribosomal subunit protein uS13">
    <location>
        <begin position="2"/>
        <end position="118"/>
    </location>
</feature>
<feature type="region of interest" description="Disordered" evidence="3">
    <location>
        <begin position="94"/>
        <end position="118"/>
    </location>
</feature>
<dbReference type="EMBL" id="AE006468">
    <property type="protein sequence ID" value="AAL22281.1"/>
    <property type="molecule type" value="Genomic_DNA"/>
</dbReference>
<dbReference type="RefSeq" id="NP_462322.1">
    <property type="nucleotide sequence ID" value="NC_003197.2"/>
</dbReference>
<dbReference type="RefSeq" id="WP_000090780.1">
    <property type="nucleotide sequence ID" value="NC_003197.2"/>
</dbReference>
<dbReference type="SMR" id="Q8ZLM1"/>
<dbReference type="STRING" id="99287.STM3418"/>
<dbReference type="PaxDb" id="99287-STM3418"/>
<dbReference type="GeneID" id="1254941"/>
<dbReference type="GeneID" id="66757753"/>
<dbReference type="KEGG" id="stm:STM3418"/>
<dbReference type="PATRIC" id="fig|99287.12.peg.3615"/>
<dbReference type="HOGENOM" id="CLU_103849_1_2_6"/>
<dbReference type="OMA" id="MNVKRLM"/>
<dbReference type="PhylomeDB" id="Q8ZLM1"/>
<dbReference type="BioCyc" id="SENT99287:STM3418-MONOMER"/>
<dbReference type="Proteomes" id="UP000001014">
    <property type="component" value="Chromosome"/>
</dbReference>
<dbReference type="GO" id="GO:0005829">
    <property type="term" value="C:cytosol"/>
    <property type="evidence" value="ECO:0000318"/>
    <property type="project" value="GO_Central"/>
</dbReference>
<dbReference type="GO" id="GO:0015935">
    <property type="term" value="C:small ribosomal subunit"/>
    <property type="evidence" value="ECO:0000318"/>
    <property type="project" value="GO_Central"/>
</dbReference>
<dbReference type="GO" id="GO:0019843">
    <property type="term" value="F:rRNA binding"/>
    <property type="evidence" value="ECO:0007669"/>
    <property type="project" value="UniProtKB-UniRule"/>
</dbReference>
<dbReference type="GO" id="GO:0003735">
    <property type="term" value="F:structural constituent of ribosome"/>
    <property type="evidence" value="ECO:0007669"/>
    <property type="project" value="InterPro"/>
</dbReference>
<dbReference type="GO" id="GO:0000049">
    <property type="term" value="F:tRNA binding"/>
    <property type="evidence" value="ECO:0007669"/>
    <property type="project" value="UniProtKB-UniRule"/>
</dbReference>
<dbReference type="GO" id="GO:0006412">
    <property type="term" value="P:translation"/>
    <property type="evidence" value="ECO:0007669"/>
    <property type="project" value="UniProtKB-UniRule"/>
</dbReference>
<dbReference type="FunFam" id="1.10.8.50:FF:000001">
    <property type="entry name" value="30S ribosomal protein S13"/>
    <property type="match status" value="1"/>
</dbReference>
<dbReference type="FunFam" id="4.10.910.10:FF:000001">
    <property type="entry name" value="30S ribosomal protein S13"/>
    <property type="match status" value="1"/>
</dbReference>
<dbReference type="Gene3D" id="1.10.8.50">
    <property type="match status" value="1"/>
</dbReference>
<dbReference type="Gene3D" id="4.10.910.10">
    <property type="entry name" value="30s ribosomal protein s13, domain 2"/>
    <property type="match status" value="1"/>
</dbReference>
<dbReference type="HAMAP" id="MF_01315">
    <property type="entry name" value="Ribosomal_uS13"/>
    <property type="match status" value="1"/>
</dbReference>
<dbReference type="InterPro" id="IPR027437">
    <property type="entry name" value="Rbsml_uS13_C"/>
</dbReference>
<dbReference type="InterPro" id="IPR001892">
    <property type="entry name" value="Ribosomal_uS13"/>
</dbReference>
<dbReference type="InterPro" id="IPR010979">
    <property type="entry name" value="Ribosomal_uS13-like_H2TH"/>
</dbReference>
<dbReference type="InterPro" id="IPR019980">
    <property type="entry name" value="Ribosomal_uS13_bac-type"/>
</dbReference>
<dbReference type="InterPro" id="IPR018269">
    <property type="entry name" value="Ribosomal_uS13_CS"/>
</dbReference>
<dbReference type="NCBIfam" id="TIGR03631">
    <property type="entry name" value="uS13_bact"/>
    <property type="match status" value="1"/>
</dbReference>
<dbReference type="PANTHER" id="PTHR10871">
    <property type="entry name" value="30S RIBOSOMAL PROTEIN S13/40S RIBOSOMAL PROTEIN S18"/>
    <property type="match status" value="1"/>
</dbReference>
<dbReference type="PANTHER" id="PTHR10871:SF1">
    <property type="entry name" value="SMALL RIBOSOMAL SUBUNIT PROTEIN US13M"/>
    <property type="match status" value="1"/>
</dbReference>
<dbReference type="Pfam" id="PF00416">
    <property type="entry name" value="Ribosomal_S13"/>
    <property type="match status" value="1"/>
</dbReference>
<dbReference type="PIRSF" id="PIRSF002134">
    <property type="entry name" value="Ribosomal_S13"/>
    <property type="match status" value="1"/>
</dbReference>
<dbReference type="SUPFAM" id="SSF46946">
    <property type="entry name" value="S13-like H2TH domain"/>
    <property type="match status" value="1"/>
</dbReference>
<dbReference type="PROSITE" id="PS00646">
    <property type="entry name" value="RIBOSOMAL_S13_1"/>
    <property type="match status" value="1"/>
</dbReference>
<dbReference type="PROSITE" id="PS50159">
    <property type="entry name" value="RIBOSOMAL_S13_2"/>
    <property type="match status" value="1"/>
</dbReference>
<accession>Q8ZLM1</accession>
<name>RS13_SALTY</name>